<sequence length="296" mass="32503">MTNKLTSFLADRKKTIENQLSVYTEKLDMPDSLKKSMLYSLQAGGKRLRPLIVLAVLNAYGKSEKDGIPVGCAVEMIHTYSLIHDDLPCMDDDDLRRGKPTNHKVFGEATAVLAGDGLLTESFKLITSHVSDEVSAEKRLRLVNELISAAGTEGMVGGQVADMEAENRQVTLEELESIHERKTAKLLGFCVIAGAILADAPEEDIETLRTFSSHIGIGFQIRDDILDLEGSEEKIGKRVGSDTTNDKSTYPSLLSLEGAKHKLDVHIKEAKRLIGGLSLQKDLLYELCDLIAARDH</sequence>
<dbReference type="EC" id="2.5.1.10"/>
<dbReference type="EMBL" id="D84432">
    <property type="protein sequence ID" value="BAA12575.1"/>
    <property type="molecule type" value="Genomic_DNA"/>
</dbReference>
<dbReference type="EMBL" id="AL009126">
    <property type="protein sequence ID" value="CAB14359.2"/>
    <property type="molecule type" value="Genomic_DNA"/>
</dbReference>
<dbReference type="PIR" id="A69961">
    <property type="entry name" value="A69961"/>
</dbReference>
<dbReference type="RefSeq" id="NP_390308.2">
    <property type="nucleotide sequence ID" value="NC_000964.3"/>
</dbReference>
<dbReference type="RefSeq" id="WP_003230262.1">
    <property type="nucleotide sequence ID" value="NZ_OZ025638.1"/>
</dbReference>
<dbReference type="SMR" id="P54383"/>
<dbReference type="FunCoup" id="P54383">
    <property type="interactions" value="406"/>
</dbReference>
<dbReference type="STRING" id="224308.BSU24280"/>
<dbReference type="PaxDb" id="224308-BSU24280"/>
<dbReference type="EnsemblBacteria" id="CAB14359">
    <property type="protein sequence ID" value="CAB14359"/>
    <property type="gene ID" value="BSU_24280"/>
</dbReference>
<dbReference type="GeneID" id="938652"/>
<dbReference type="KEGG" id="bsu:BSU24280"/>
<dbReference type="PATRIC" id="fig|224308.179.peg.2646"/>
<dbReference type="eggNOG" id="COG0142">
    <property type="taxonomic scope" value="Bacteria"/>
</dbReference>
<dbReference type="InParanoid" id="P54383"/>
<dbReference type="OrthoDB" id="9805316at2"/>
<dbReference type="PhylomeDB" id="P54383"/>
<dbReference type="BioCyc" id="BSUB:BSU24280-MONOMER"/>
<dbReference type="Proteomes" id="UP000001570">
    <property type="component" value="Chromosome"/>
</dbReference>
<dbReference type="GO" id="GO:0005737">
    <property type="term" value="C:cytoplasm"/>
    <property type="evidence" value="ECO:0007669"/>
    <property type="project" value="UniProtKB-SubCell"/>
</dbReference>
<dbReference type="GO" id="GO:0004337">
    <property type="term" value="F:(2E,6E)-farnesyl diphosphate synthase activity"/>
    <property type="evidence" value="ECO:0007669"/>
    <property type="project" value="UniProtKB-EC"/>
</dbReference>
<dbReference type="GO" id="GO:0046872">
    <property type="term" value="F:metal ion binding"/>
    <property type="evidence" value="ECO:0007669"/>
    <property type="project" value="UniProtKB-KW"/>
</dbReference>
<dbReference type="GO" id="GO:0004659">
    <property type="term" value="F:prenyltransferase activity"/>
    <property type="evidence" value="ECO:0000318"/>
    <property type="project" value="GO_Central"/>
</dbReference>
<dbReference type="GO" id="GO:0008299">
    <property type="term" value="P:isoprenoid biosynthetic process"/>
    <property type="evidence" value="ECO:0007669"/>
    <property type="project" value="UniProtKB-KW"/>
</dbReference>
<dbReference type="CDD" id="cd00685">
    <property type="entry name" value="Trans_IPPS_HT"/>
    <property type="match status" value="1"/>
</dbReference>
<dbReference type="FunFam" id="1.10.600.10:FF:000001">
    <property type="entry name" value="Geranylgeranyl diphosphate synthase"/>
    <property type="match status" value="1"/>
</dbReference>
<dbReference type="Gene3D" id="1.10.600.10">
    <property type="entry name" value="Farnesyl Diphosphate Synthase"/>
    <property type="match status" value="1"/>
</dbReference>
<dbReference type="InterPro" id="IPR008949">
    <property type="entry name" value="Isoprenoid_synthase_dom_sf"/>
</dbReference>
<dbReference type="InterPro" id="IPR000092">
    <property type="entry name" value="Polyprenyl_synt"/>
</dbReference>
<dbReference type="InterPro" id="IPR033749">
    <property type="entry name" value="Polyprenyl_synt_CS"/>
</dbReference>
<dbReference type="InterPro" id="IPR053378">
    <property type="entry name" value="Prenyl_diphosphate_synthase"/>
</dbReference>
<dbReference type="NCBIfam" id="NF045485">
    <property type="entry name" value="FPPsyn"/>
    <property type="match status" value="1"/>
</dbReference>
<dbReference type="PANTHER" id="PTHR43281">
    <property type="entry name" value="FARNESYL DIPHOSPHATE SYNTHASE"/>
    <property type="match status" value="1"/>
</dbReference>
<dbReference type="PANTHER" id="PTHR43281:SF1">
    <property type="entry name" value="FARNESYL DIPHOSPHATE SYNTHASE"/>
    <property type="match status" value="1"/>
</dbReference>
<dbReference type="Pfam" id="PF00348">
    <property type="entry name" value="polyprenyl_synt"/>
    <property type="match status" value="1"/>
</dbReference>
<dbReference type="SFLD" id="SFLDS00005">
    <property type="entry name" value="Isoprenoid_Synthase_Type_I"/>
    <property type="match status" value="1"/>
</dbReference>
<dbReference type="SFLD" id="SFLDG01017">
    <property type="entry name" value="Polyprenyl_Transferase_Like"/>
    <property type="match status" value="1"/>
</dbReference>
<dbReference type="SUPFAM" id="SSF48576">
    <property type="entry name" value="Terpenoid synthases"/>
    <property type="match status" value="1"/>
</dbReference>
<dbReference type="PROSITE" id="PS00723">
    <property type="entry name" value="POLYPRENYL_SYNTHASE_1"/>
    <property type="match status" value="1"/>
</dbReference>
<dbReference type="PROSITE" id="PS00444">
    <property type="entry name" value="POLYPRENYL_SYNTHASE_2"/>
    <property type="match status" value="1"/>
</dbReference>
<protein>
    <recommendedName>
        <fullName>Farnesyl diphosphate synthase</fullName>
        <shortName>FPP synthase</shortName>
        <ecNumber>2.5.1.10</ecNumber>
    </recommendedName>
    <alternativeName>
        <fullName>(2E,6E)-farnesyl diphosphate synthase</fullName>
    </alternativeName>
    <alternativeName>
        <fullName>Geranyltranstransferase</fullName>
    </alternativeName>
</protein>
<keyword id="KW-0963">Cytoplasm</keyword>
<keyword id="KW-0414">Isoprene biosynthesis</keyword>
<keyword id="KW-0460">Magnesium</keyword>
<keyword id="KW-0479">Metal-binding</keyword>
<keyword id="KW-1185">Reference proteome</keyword>
<keyword id="KW-0808">Transferase</keyword>
<organism>
    <name type="scientific">Bacillus subtilis (strain 168)</name>
    <dbReference type="NCBI Taxonomy" id="224308"/>
    <lineage>
        <taxon>Bacteria</taxon>
        <taxon>Bacillati</taxon>
        <taxon>Bacillota</taxon>
        <taxon>Bacilli</taxon>
        <taxon>Bacillales</taxon>
        <taxon>Bacillaceae</taxon>
        <taxon>Bacillus</taxon>
    </lineage>
</organism>
<proteinExistence type="inferred from homology"/>
<feature type="chain" id="PRO_0000123986" description="Farnesyl diphosphate synthase">
    <location>
        <begin position="1"/>
        <end position="296"/>
    </location>
</feature>
<feature type="binding site" evidence="2">
    <location>
        <position position="46"/>
    </location>
    <ligand>
        <name>isopentenyl diphosphate</name>
        <dbReference type="ChEBI" id="CHEBI:128769"/>
    </ligand>
</feature>
<feature type="binding site" evidence="2">
    <location>
        <position position="49"/>
    </location>
    <ligand>
        <name>isopentenyl diphosphate</name>
        <dbReference type="ChEBI" id="CHEBI:128769"/>
    </ligand>
</feature>
<feature type="binding site" evidence="3">
    <location>
        <position position="78"/>
    </location>
    <ligand>
        <name>isopentenyl diphosphate</name>
        <dbReference type="ChEBI" id="CHEBI:128769"/>
    </ligand>
</feature>
<feature type="binding site" evidence="2">
    <location>
        <position position="85"/>
    </location>
    <ligand>
        <name>Mg(2+)</name>
        <dbReference type="ChEBI" id="CHEBI:18420"/>
        <label>1</label>
    </ligand>
</feature>
<feature type="binding site" evidence="2">
    <location>
        <position position="85"/>
    </location>
    <ligand>
        <name>Mg(2+)</name>
        <dbReference type="ChEBI" id="CHEBI:18420"/>
        <label>2</label>
    </ligand>
</feature>
<feature type="binding site" evidence="2">
    <location>
        <position position="91"/>
    </location>
    <ligand>
        <name>Mg(2+)</name>
        <dbReference type="ChEBI" id="CHEBI:18420"/>
        <label>1</label>
    </ligand>
</feature>
<feature type="binding site" evidence="2">
    <location>
        <position position="91"/>
    </location>
    <ligand>
        <name>Mg(2+)</name>
        <dbReference type="ChEBI" id="CHEBI:18420"/>
        <label>2</label>
    </ligand>
</feature>
<feature type="binding site" evidence="1">
    <location>
        <position position="96"/>
    </location>
    <ligand>
        <name>(2E)-geranyl diphosphate</name>
        <dbReference type="ChEBI" id="CHEBI:58057"/>
    </ligand>
</feature>
<feature type="binding site" evidence="2">
    <location>
        <position position="97"/>
    </location>
    <ligand>
        <name>isopentenyl diphosphate</name>
        <dbReference type="ChEBI" id="CHEBI:128769"/>
    </ligand>
</feature>
<feature type="binding site" evidence="1">
    <location>
        <position position="182"/>
    </location>
    <ligand>
        <name>(2E)-geranyl diphosphate</name>
        <dbReference type="ChEBI" id="CHEBI:58057"/>
    </ligand>
</feature>
<feature type="binding site" evidence="1">
    <location>
        <position position="183"/>
    </location>
    <ligand>
        <name>(2E)-geranyl diphosphate</name>
        <dbReference type="ChEBI" id="CHEBI:58057"/>
    </ligand>
</feature>
<feature type="binding site" evidence="1">
    <location>
        <position position="220"/>
    </location>
    <ligand>
        <name>(2E)-geranyl diphosphate</name>
        <dbReference type="ChEBI" id="CHEBI:58057"/>
    </ligand>
</feature>
<feature type="binding site" evidence="1">
    <location>
        <position position="237"/>
    </location>
    <ligand>
        <name>(2E)-geranyl diphosphate</name>
        <dbReference type="ChEBI" id="CHEBI:58057"/>
    </ligand>
</feature>
<feature type="sequence conflict" description="In Ref. 1; BAA12575." evidence="4" ref="1">
    <original>E</original>
    <variation>G</variation>
    <location>
        <position position="166"/>
    </location>
</feature>
<feature type="sequence conflict" description="In Ref. 1; BAA12575." evidence="4" ref="1">
    <original>A</original>
    <variation>S</variation>
    <location>
        <position position="184"/>
    </location>
</feature>
<feature type="sequence conflict" description="In Ref. 1; BAA12575." evidence="4" ref="1">
    <original>KRLIGGLSLQKDLLYELCDLIAARDH</original>
    <variation>ND</variation>
    <location>
        <begin position="271"/>
        <end position="296"/>
    </location>
</feature>
<name>ISPA_BACSU</name>
<gene>
    <name type="primary">ispA</name>
    <name type="synonym">yqiD</name>
    <name type="ordered locus">BSU24280</name>
</gene>
<reference key="1">
    <citation type="journal article" date="1996" name="Microbiology">
        <title>Systematic sequencing of the 283 kb 210 degrees-232 degrees region of the Bacillus subtilis genome containing the skin element and many sporulation genes.</title>
        <authorList>
            <person name="Mizuno M."/>
            <person name="Masuda S."/>
            <person name="Takemaru K."/>
            <person name="Hosono S."/>
            <person name="Sato T."/>
            <person name="Takeuchi M."/>
            <person name="Kobayashi Y."/>
        </authorList>
    </citation>
    <scope>NUCLEOTIDE SEQUENCE [GENOMIC DNA]</scope>
    <source>
        <strain>168 / JH642</strain>
    </source>
</reference>
<reference key="2">
    <citation type="journal article" date="1997" name="Nature">
        <title>The complete genome sequence of the Gram-positive bacterium Bacillus subtilis.</title>
        <authorList>
            <person name="Kunst F."/>
            <person name="Ogasawara N."/>
            <person name="Moszer I."/>
            <person name="Albertini A.M."/>
            <person name="Alloni G."/>
            <person name="Azevedo V."/>
            <person name="Bertero M.G."/>
            <person name="Bessieres P."/>
            <person name="Bolotin A."/>
            <person name="Borchert S."/>
            <person name="Borriss R."/>
            <person name="Boursier L."/>
            <person name="Brans A."/>
            <person name="Braun M."/>
            <person name="Brignell S.C."/>
            <person name="Bron S."/>
            <person name="Brouillet S."/>
            <person name="Bruschi C.V."/>
            <person name="Caldwell B."/>
            <person name="Capuano V."/>
            <person name="Carter N.M."/>
            <person name="Choi S.-K."/>
            <person name="Codani J.-J."/>
            <person name="Connerton I.F."/>
            <person name="Cummings N.J."/>
            <person name="Daniel R.A."/>
            <person name="Denizot F."/>
            <person name="Devine K.M."/>
            <person name="Duesterhoeft A."/>
            <person name="Ehrlich S.D."/>
            <person name="Emmerson P.T."/>
            <person name="Entian K.-D."/>
            <person name="Errington J."/>
            <person name="Fabret C."/>
            <person name="Ferrari E."/>
            <person name="Foulger D."/>
            <person name="Fritz C."/>
            <person name="Fujita M."/>
            <person name="Fujita Y."/>
            <person name="Fuma S."/>
            <person name="Galizzi A."/>
            <person name="Galleron N."/>
            <person name="Ghim S.-Y."/>
            <person name="Glaser P."/>
            <person name="Goffeau A."/>
            <person name="Golightly E.J."/>
            <person name="Grandi G."/>
            <person name="Guiseppi G."/>
            <person name="Guy B.J."/>
            <person name="Haga K."/>
            <person name="Haiech J."/>
            <person name="Harwood C.R."/>
            <person name="Henaut A."/>
            <person name="Hilbert H."/>
            <person name="Holsappel S."/>
            <person name="Hosono S."/>
            <person name="Hullo M.-F."/>
            <person name="Itaya M."/>
            <person name="Jones L.-M."/>
            <person name="Joris B."/>
            <person name="Karamata D."/>
            <person name="Kasahara Y."/>
            <person name="Klaerr-Blanchard M."/>
            <person name="Klein C."/>
            <person name="Kobayashi Y."/>
            <person name="Koetter P."/>
            <person name="Koningstein G."/>
            <person name="Krogh S."/>
            <person name="Kumano M."/>
            <person name="Kurita K."/>
            <person name="Lapidus A."/>
            <person name="Lardinois S."/>
            <person name="Lauber J."/>
            <person name="Lazarevic V."/>
            <person name="Lee S.-M."/>
            <person name="Levine A."/>
            <person name="Liu H."/>
            <person name="Masuda S."/>
            <person name="Mauel C."/>
            <person name="Medigue C."/>
            <person name="Medina N."/>
            <person name="Mellado R.P."/>
            <person name="Mizuno M."/>
            <person name="Moestl D."/>
            <person name="Nakai S."/>
            <person name="Noback M."/>
            <person name="Noone D."/>
            <person name="O'Reilly M."/>
            <person name="Ogawa K."/>
            <person name="Ogiwara A."/>
            <person name="Oudega B."/>
            <person name="Park S.-H."/>
            <person name="Parro V."/>
            <person name="Pohl T.M."/>
            <person name="Portetelle D."/>
            <person name="Porwollik S."/>
            <person name="Prescott A.M."/>
            <person name="Presecan E."/>
            <person name="Pujic P."/>
            <person name="Purnelle B."/>
            <person name="Rapoport G."/>
            <person name="Rey M."/>
            <person name="Reynolds S."/>
            <person name="Rieger M."/>
            <person name="Rivolta C."/>
            <person name="Rocha E."/>
            <person name="Roche B."/>
            <person name="Rose M."/>
            <person name="Sadaie Y."/>
            <person name="Sato T."/>
            <person name="Scanlan E."/>
            <person name="Schleich S."/>
            <person name="Schroeter R."/>
            <person name="Scoffone F."/>
            <person name="Sekiguchi J."/>
            <person name="Sekowska A."/>
            <person name="Seror S.J."/>
            <person name="Serror P."/>
            <person name="Shin B.-S."/>
            <person name="Soldo B."/>
            <person name="Sorokin A."/>
            <person name="Tacconi E."/>
            <person name="Takagi T."/>
            <person name="Takahashi H."/>
            <person name="Takemaru K."/>
            <person name="Takeuchi M."/>
            <person name="Tamakoshi A."/>
            <person name="Tanaka T."/>
            <person name="Terpstra P."/>
            <person name="Tognoni A."/>
            <person name="Tosato V."/>
            <person name="Uchiyama S."/>
            <person name="Vandenbol M."/>
            <person name="Vannier F."/>
            <person name="Vassarotti A."/>
            <person name="Viari A."/>
            <person name="Wambutt R."/>
            <person name="Wedler E."/>
            <person name="Wedler H."/>
            <person name="Weitzenegger T."/>
            <person name="Winters P."/>
            <person name="Wipat A."/>
            <person name="Yamamoto H."/>
            <person name="Yamane K."/>
            <person name="Yasumoto K."/>
            <person name="Yata K."/>
            <person name="Yoshida K."/>
            <person name="Yoshikawa H.-F."/>
            <person name="Zumstein E."/>
            <person name="Yoshikawa H."/>
            <person name="Danchin A."/>
        </authorList>
    </citation>
    <scope>NUCLEOTIDE SEQUENCE [LARGE SCALE GENOMIC DNA]</scope>
    <source>
        <strain>168</strain>
    </source>
</reference>
<reference key="3">
    <citation type="journal article" date="2009" name="Microbiology">
        <title>From a consortium sequence to a unified sequence: the Bacillus subtilis 168 reference genome a decade later.</title>
        <authorList>
            <person name="Barbe V."/>
            <person name="Cruveiller S."/>
            <person name="Kunst F."/>
            <person name="Lenoble P."/>
            <person name="Meurice G."/>
            <person name="Sekowska A."/>
            <person name="Vallenet D."/>
            <person name="Wang T."/>
            <person name="Moszer I."/>
            <person name="Medigue C."/>
            <person name="Danchin A."/>
        </authorList>
    </citation>
    <scope>SEQUENCE REVISION TO 166; 184 AND C-TERMINUS</scope>
</reference>
<comment type="catalytic activity">
    <reaction>
        <text>isopentenyl diphosphate + (2E)-geranyl diphosphate = (2E,6E)-farnesyl diphosphate + diphosphate</text>
        <dbReference type="Rhea" id="RHEA:19361"/>
        <dbReference type="ChEBI" id="CHEBI:33019"/>
        <dbReference type="ChEBI" id="CHEBI:58057"/>
        <dbReference type="ChEBI" id="CHEBI:128769"/>
        <dbReference type="ChEBI" id="CHEBI:175763"/>
        <dbReference type="EC" id="2.5.1.10"/>
    </reaction>
</comment>
<comment type="cofactor">
    <cofactor evidence="1">
        <name>Mg(2+)</name>
        <dbReference type="ChEBI" id="CHEBI:18420"/>
    </cofactor>
    <text evidence="1">Binds 2 Mg(2+) ions per subunit.</text>
</comment>
<comment type="subcellular location">
    <subcellularLocation>
        <location evidence="1">Cytoplasm</location>
    </subcellularLocation>
</comment>
<comment type="similarity">
    <text evidence="4">Belongs to the FPP/GGPP synthase family.</text>
</comment>
<accession>P54383</accession>
<evidence type="ECO:0000250" key="1"/>
<evidence type="ECO:0000250" key="2">
    <source>
        <dbReference type="UniProtKB" id="P14324"/>
    </source>
</evidence>
<evidence type="ECO:0000250" key="3">
    <source>
        <dbReference type="UniProtKB" id="Q12051"/>
    </source>
</evidence>
<evidence type="ECO:0000305" key="4"/>